<gene>
    <name evidence="1" type="primary">ureA</name>
    <name type="ordered locus">UUR10_0479</name>
</gene>
<proteinExistence type="inferred from homology"/>
<protein>
    <recommendedName>
        <fullName evidence="1">Urease subunit gamma</fullName>
        <ecNumber evidence="1">3.5.1.5</ecNumber>
    </recommendedName>
    <alternativeName>
        <fullName evidence="1">Urea amidohydrolase subunit gamma</fullName>
    </alternativeName>
</protein>
<comment type="catalytic activity">
    <reaction evidence="1">
        <text>urea + 2 H2O + H(+) = hydrogencarbonate + 2 NH4(+)</text>
        <dbReference type="Rhea" id="RHEA:20557"/>
        <dbReference type="ChEBI" id="CHEBI:15377"/>
        <dbReference type="ChEBI" id="CHEBI:15378"/>
        <dbReference type="ChEBI" id="CHEBI:16199"/>
        <dbReference type="ChEBI" id="CHEBI:17544"/>
        <dbReference type="ChEBI" id="CHEBI:28938"/>
        <dbReference type="EC" id="3.5.1.5"/>
    </reaction>
</comment>
<comment type="pathway">
    <text evidence="1">Nitrogen metabolism; urea degradation; CO(2) and NH(3) from urea (urease route): step 1/1.</text>
</comment>
<comment type="subunit">
    <text evidence="1">Heterotrimer of UreA (gamma), UreB (beta) and UreC (alpha) subunits. Three heterotrimers associate to form the active enzyme.</text>
</comment>
<comment type="subcellular location">
    <subcellularLocation>
        <location evidence="1">Cytoplasm</location>
    </subcellularLocation>
</comment>
<comment type="similarity">
    <text evidence="1">Belongs to the urease gamma subunit family.</text>
</comment>
<evidence type="ECO:0000255" key="1">
    <source>
        <dbReference type="HAMAP-Rule" id="MF_00739"/>
    </source>
</evidence>
<accession>B5ZBT1</accession>
<accession>P17274</accession>
<accession>Q9R2R9</accession>
<keyword id="KW-0963">Cytoplasm</keyword>
<keyword id="KW-0378">Hydrolase</keyword>
<name>URE3_UREU1</name>
<dbReference type="EC" id="3.5.1.5" evidence="1"/>
<dbReference type="EMBL" id="AF085726">
    <property type="protein sequence ID" value="AAD28122.1"/>
    <property type="molecule type" value="Genomic_DNA"/>
</dbReference>
<dbReference type="EMBL" id="CP001184">
    <property type="protein sequence ID" value="ACI60150.1"/>
    <property type="molecule type" value="Genomic_DNA"/>
</dbReference>
<dbReference type="RefSeq" id="WP_004026214.1">
    <property type="nucleotide sequence ID" value="NC_011374.1"/>
</dbReference>
<dbReference type="SMR" id="B5ZBT1"/>
<dbReference type="STRING" id="565575.UUR10_0479"/>
<dbReference type="KEGG" id="uue:UUR10_0479"/>
<dbReference type="eggNOG" id="COG0831">
    <property type="taxonomic scope" value="Bacteria"/>
</dbReference>
<dbReference type="HOGENOM" id="CLU_145825_1_0_14"/>
<dbReference type="OrthoDB" id="9793527at2"/>
<dbReference type="UniPathway" id="UPA00258">
    <property type="reaction ID" value="UER00370"/>
</dbReference>
<dbReference type="Proteomes" id="UP000002018">
    <property type="component" value="Chromosome"/>
</dbReference>
<dbReference type="GO" id="GO:0005737">
    <property type="term" value="C:cytoplasm"/>
    <property type="evidence" value="ECO:0007669"/>
    <property type="project" value="UniProtKB-SubCell"/>
</dbReference>
<dbReference type="GO" id="GO:0016151">
    <property type="term" value="F:nickel cation binding"/>
    <property type="evidence" value="ECO:0007669"/>
    <property type="project" value="InterPro"/>
</dbReference>
<dbReference type="GO" id="GO:0009039">
    <property type="term" value="F:urease activity"/>
    <property type="evidence" value="ECO:0007669"/>
    <property type="project" value="UniProtKB-UniRule"/>
</dbReference>
<dbReference type="GO" id="GO:0043419">
    <property type="term" value="P:urea catabolic process"/>
    <property type="evidence" value="ECO:0007669"/>
    <property type="project" value="UniProtKB-UniRule"/>
</dbReference>
<dbReference type="CDD" id="cd00390">
    <property type="entry name" value="Urease_gamma"/>
    <property type="match status" value="1"/>
</dbReference>
<dbReference type="Gene3D" id="3.30.280.10">
    <property type="entry name" value="Urease, gamma-like subunit"/>
    <property type="match status" value="1"/>
</dbReference>
<dbReference type="HAMAP" id="MF_00739">
    <property type="entry name" value="Urease_gamma"/>
    <property type="match status" value="1"/>
</dbReference>
<dbReference type="InterPro" id="IPR012010">
    <property type="entry name" value="Urease_gamma"/>
</dbReference>
<dbReference type="InterPro" id="IPR002026">
    <property type="entry name" value="Urease_gamma/gamma-beta_su"/>
</dbReference>
<dbReference type="InterPro" id="IPR036463">
    <property type="entry name" value="Urease_gamma_sf"/>
</dbReference>
<dbReference type="InterPro" id="IPR050069">
    <property type="entry name" value="Urease_subunit"/>
</dbReference>
<dbReference type="NCBIfam" id="NF009712">
    <property type="entry name" value="PRK13241.1"/>
    <property type="match status" value="1"/>
</dbReference>
<dbReference type="NCBIfam" id="TIGR00193">
    <property type="entry name" value="urease_gam"/>
    <property type="match status" value="1"/>
</dbReference>
<dbReference type="PANTHER" id="PTHR33569">
    <property type="entry name" value="UREASE"/>
    <property type="match status" value="1"/>
</dbReference>
<dbReference type="PANTHER" id="PTHR33569:SF1">
    <property type="entry name" value="UREASE"/>
    <property type="match status" value="1"/>
</dbReference>
<dbReference type="Pfam" id="PF00547">
    <property type="entry name" value="Urease_gamma"/>
    <property type="match status" value="1"/>
</dbReference>
<dbReference type="PIRSF" id="PIRSF001223">
    <property type="entry name" value="Urease_gamma"/>
    <property type="match status" value="1"/>
</dbReference>
<dbReference type="SUPFAM" id="SSF54111">
    <property type="entry name" value="Urease, gamma-subunit"/>
    <property type="match status" value="1"/>
</dbReference>
<sequence>MNLSLREIQKLLVTVAADVARRRLARGLKLNYSEAVALITDHVVEGARDGKLVADLMQSAREVLRVDQVMEGVDTMVGIIQVEVTFPDGTKLVSVHDPIYK</sequence>
<feature type="chain" id="PRO_1000199888" description="Urease subunit gamma">
    <location>
        <begin position="1"/>
        <end position="101"/>
    </location>
</feature>
<reference key="1">
    <citation type="journal article" date="1999" name="Int. J. Syst. Bacteriol.">
        <title>Phylogenetic analysis of Ureaplasma urealyticum -- support for the establishment of a new species, Ureaplasma parvum.</title>
        <authorList>
            <person name="Kong F."/>
            <person name="James G."/>
            <person name="Ma Z."/>
            <person name="Gordon S."/>
            <person name="Wang B."/>
            <person name="Gilbert G.L."/>
        </authorList>
    </citation>
    <scope>NUCLEOTIDE SEQUENCE [GENOMIC DNA]</scope>
</reference>
<reference key="2">
    <citation type="submission" date="2008-10" db="EMBL/GenBank/DDBJ databases">
        <title>Genome sequence of Ureaplasma urealyticum serovar 10 ATCC-33699.</title>
        <authorList>
            <person name="Shrivastava S."/>
            <person name="Methe B.A."/>
            <person name="Glass J."/>
            <person name="White K."/>
            <person name="Duffy L.B."/>
        </authorList>
    </citation>
    <scope>NUCLEOTIDE SEQUENCE [LARGE SCALE GENOMIC DNA]</scope>
    <source>
        <strain>ATCC 33699 / Western</strain>
    </source>
</reference>
<organism>
    <name type="scientific">Ureaplasma urealyticum serovar 10 (strain ATCC 33699 / Western)</name>
    <dbReference type="NCBI Taxonomy" id="565575"/>
    <lineage>
        <taxon>Bacteria</taxon>
        <taxon>Bacillati</taxon>
        <taxon>Mycoplasmatota</taxon>
        <taxon>Mycoplasmoidales</taxon>
        <taxon>Mycoplasmoidaceae</taxon>
        <taxon>Ureaplasma</taxon>
    </lineage>
</organism>